<reference key="1">
    <citation type="submission" date="2005-10" db="EMBL/GenBank/DDBJ databases">
        <title>Complete sequence of chromosome 1 of Burkholderia sp. 383.</title>
        <authorList>
            <consortium name="US DOE Joint Genome Institute"/>
            <person name="Copeland A."/>
            <person name="Lucas S."/>
            <person name="Lapidus A."/>
            <person name="Barry K."/>
            <person name="Detter J.C."/>
            <person name="Glavina T."/>
            <person name="Hammon N."/>
            <person name="Israni S."/>
            <person name="Pitluck S."/>
            <person name="Chain P."/>
            <person name="Malfatti S."/>
            <person name="Shin M."/>
            <person name="Vergez L."/>
            <person name="Schmutz J."/>
            <person name="Larimer F."/>
            <person name="Land M."/>
            <person name="Kyrpides N."/>
            <person name="Lykidis A."/>
            <person name="Richardson P."/>
        </authorList>
    </citation>
    <scope>NUCLEOTIDE SEQUENCE [LARGE SCALE GENOMIC DNA]</scope>
    <source>
        <strain>ATCC 17760 / DSM 23089 / LMG 22485 / NCIMB 9086 / R18194 / 383</strain>
    </source>
</reference>
<sequence>MSVRYPLLNRELGILGFNERVLAQAADPQVPLLERLRFICITSSNLDEFFEVRMAGLQEQIRDNPGALTPDGMSLQHAYDLVVERAQRLVHRQYTMLHETVLPALEQEGIYFHASDTWNDEQLEWARRYFLDELLPVLTPIGLDPAHPFPRVLNKSLNFVVELEGRDAFGRQAVMGIVQAPRALPRVVRMPHALSGFEHGFVLLSSFMQYFVGELFPQLTVKSCNQFRITRNSELFVDEDEITNLRVALQGELPARHLGNAVRLEVSADTPPHIVRRLLVESELGEKDCYRVAGSVNLVRLMQIPDLVDRPDLKFTPFTASTPSAITNAPTMFDAIDNGDILLHHPYESFQPVLELLQQAARDPSVVAIKQTIYRTGTDSPLMDALMEAARNGKEVTVVVELLARFDEETNINWASQLEAVGAHVVYGVVGHKCHAKMMLIVRRVVQAGKASLRRYVHLGTGNYHPRTARLYTDFGLMTADQKICEDVHHVFQQLTGIGGELTLHELWQSPFTLHPRIIDAIRVEIDNARAGKRARVVAKMNALLEPTVIAALYEASQAGVKVDLIVRGVCALKPGVPGLSENITVRSIVGRFLEHHRIYYFHANGAEDVYLSSADWMDRNLFRRVEVAFPIRDRKLKRRVIAEGLSVCLGDNQSAWQMHSDGHYRRRRAGKTIRNAQLGLLAKFCS</sequence>
<accession>Q39HM0</accession>
<proteinExistence type="inferred from homology"/>
<dbReference type="EC" id="2.7.4.1" evidence="1"/>
<dbReference type="EMBL" id="CP000151">
    <property type="protein sequence ID" value="ABB08046.1"/>
    <property type="molecule type" value="Genomic_DNA"/>
</dbReference>
<dbReference type="RefSeq" id="WP_041492798.1">
    <property type="nucleotide sequence ID" value="NC_007510.1"/>
</dbReference>
<dbReference type="SMR" id="Q39HM0"/>
<dbReference type="GeneID" id="45094347"/>
<dbReference type="KEGG" id="bur:Bcep18194_A4450"/>
<dbReference type="PATRIC" id="fig|482957.22.peg.1348"/>
<dbReference type="HOGENOM" id="CLU_009678_5_0_4"/>
<dbReference type="Proteomes" id="UP000002705">
    <property type="component" value="Chromosome 1"/>
</dbReference>
<dbReference type="GO" id="GO:0009358">
    <property type="term" value="C:polyphosphate kinase complex"/>
    <property type="evidence" value="ECO:0007669"/>
    <property type="project" value="InterPro"/>
</dbReference>
<dbReference type="GO" id="GO:0005524">
    <property type="term" value="F:ATP binding"/>
    <property type="evidence" value="ECO:0007669"/>
    <property type="project" value="UniProtKB-KW"/>
</dbReference>
<dbReference type="GO" id="GO:0046872">
    <property type="term" value="F:metal ion binding"/>
    <property type="evidence" value="ECO:0007669"/>
    <property type="project" value="UniProtKB-KW"/>
</dbReference>
<dbReference type="GO" id="GO:0008976">
    <property type="term" value="F:polyphosphate kinase activity"/>
    <property type="evidence" value="ECO:0007669"/>
    <property type="project" value="UniProtKB-UniRule"/>
</dbReference>
<dbReference type="GO" id="GO:0006799">
    <property type="term" value="P:polyphosphate biosynthetic process"/>
    <property type="evidence" value="ECO:0007669"/>
    <property type="project" value="UniProtKB-UniRule"/>
</dbReference>
<dbReference type="CDD" id="cd09165">
    <property type="entry name" value="PLDc_PaPPK1_C1_like"/>
    <property type="match status" value="1"/>
</dbReference>
<dbReference type="CDD" id="cd09168">
    <property type="entry name" value="PLDc_PaPPK1_C2_like"/>
    <property type="match status" value="1"/>
</dbReference>
<dbReference type="Gene3D" id="3.30.870.10">
    <property type="entry name" value="Endonuclease Chain A"/>
    <property type="match status" value="2"/>
</dbReference>
<dbReference type="Gene3D" id="3.30.1840.10">
    <property type="entry name" value="Polyphosphate kinase middle domain"/>
    <property type="match status" value="1"/>
</dbReference>
<dbReference type="Gene3D" id="1.20.58.310">
    <property type="entry name" value="Polyphosphate kinase N-terminal domain"/>
    <property type="match status" value="1"/>
</dbReference>
<dbReference type="HAMAP" id="MF_00347">
    <property type="entry name" value="Polyphosphate_kinase"/>
    <property type="match status" value="1"/>
</dbReference>
<dbReference type="InterPro" id="IPR003414">
    <property type="entry name" value="PP_kinase"/>
</dbReference>
<dbReference type="InterPro" id="IPR041108">
    <property type="entry name" value="PP_kinase_C_1"/>
</dbReference>
<dbReference type="InterPro" id="IPR024953">
    <property type="entry name" value="PP_kinase_middle"/>
</dbReference>
<dbReference type="InterPro" id="IPR036830">
    <property type="entry name" value="PP_kinase_middle_dom_sf"/>
</dbReference>
<dbReference type="InterPro" id="IPR025200">
    <property type="entry name" value="PPK_C_dom2"/>
</dbReference>
<dbReference type="InterPro" id="IPR025198">
    <property type="entry name" value="PPK_N_dom"/>
</dbReference>
<dbReference type="InterPro" id="IPR036832">
    <property type="entry name" value="PPK_N_dom_sf"/>
</dbReference>
<dbReference type="NCBIfam" id="TIGR03705">
    <property type="entry name" value="poly_P_kin"/>
    <property type="match status" value="1"/>
</dbReference>
<dbReference type="NCBIfam" id="NF003917">
    <property type="entry name" value="PRK05443.1-1"/>
    <property type="match status" value="1"/>
</dbReference>
<dbReference type="NCBIfam" id="NF003918">
    <property type="entry name" value="PRK05443.1-2"/>
    <property type="match status" value="1"/>
</dbReference>
<dbReference type="NCBIfam" id="NF003921">
    <property type="entry name" value="PRK05443.2-2"/>
    <property type="match status" value="1"/>
</dbReference>
<dbReference type="PANTHER" id="PTHR30218">
    <property type="entry name" value="POLYPHOSPHATE KINASE"/>
    <property type="match status" value="1"/>
</dbReference>
<dbReference type="PANTHER" id="PTHR30218:SF0">
    <property type="entry name" value="POLYPHOSPHATE KINASE"/>
    <property type="match status" value="1"/>
</dbReference>
<dbReference type="Pfam" id="PF02503">
    <property type="entry name" value="PP_kinase"/>
    <property type="match status" value="1"/>
</dbReference>
<dbReference type="Pfam" id="PF13090">
    <property type="entry name" value="PP_kinase_C"/>
    <property type="match status" value="1"/>
</dbReference>
<dbReference type="Pfam" id="PF17941">
    <property type="entry name" value="PP_kinase_C_1"/>
    <property type="match status" value="1"/>
</dbReference>
<dbReference type="Pfam" id="PF13089">
    <property type="entry name" value="PP_kinase_N"/>
    <property type="match status" value="1"/>
</dbReference>
<dbReference type="PIRSF" id="PIRSF015589">
    <property type="entry name" value="PP_kinase"/>
    <property type="match status" value="1"/>
</dbReference>
<dbReference type="SUPFAM" id="SSF56024">
    <property type="entry name" value="Phospholipase D/nuclease"/>
    <property type="match status" value="2"/>
</dbReference>
<dbReference type="SUPFAM" id="SSF143724">
    <property type="entry name" value="PHP14-like"/>
    <property type="match status" value="1"/>
</dbReference>
<dbReference type="SUPFAM" id="SSF140356">
    <property type="entry name" value="PPK N-terminal domain-like"/>
    <property type="match status" value="1"/>
</dbReference>
<evidence type="ECO:0000255" key="1">
    <source>
        <dbReference type="HAMAP-Rule" id="MF_00347"/>
    </source>
</evidence>
<organism>
    <name type="scientific">Burkholderia lata (strain ATCC 17760 / DSM 23089 / LMG 22485 / NCIMB 9086 / R18194 / 383)</name>
    <dbReference type="NCBI Taxonomy" id="482957"/>
    <lineage>
        <taxon>Bacteria</taxon>
        <taxon>Pseudomonadati</taxon>
        <taxon>Pseudomonadota</taxon>
        <taxon>Betaproteobacteria</taxon>
        <taxon>Burkholderiales</taxon>
        <taxon>Burkholderiaceae</taxon>
        <taxon>Burkholderia</taxon>
        <taxon>Burkholderia cepacia complex</taxon>
    </lineage>
</organism>
<keyword id="KW-0067">ATP-binding</keyword>
<keyword id="KW-0418">Kinase</keyword>
<keyword id="KW-0460">Magnesium</keyword>
<keyword id="KW-0479">Metal-binding</keyword>
<keyword id="KW-0547">Nucleotide-binding</keyword>
<keyword id="KW-0597">Phosphoprotein</keyword>
<keyword id="KW-0808">Transferase</keyword>
<gene>
    <name evidence="1" type="primary">ppk</name>
    <name type="ordered locus">Bcep18194_A4450</name>
</gene>
<name>PPK1_BURL3</name>
<feature type="chain" id="PRO_1000079356" description="Polyphosphate kinase">
    <location>
        <begin position="1"/>
        <end position="687"/>
    </location>
</feature>
<feature type="active site" description="Phosphohistidine intermediate" evidence="1">
    <location>
        <position position="435"/>
    </location>
</feature>
<feature type="binding site" evidence="1">
    <location>
        <position position="45"/>
    </location>
    <ligand>
        <name>ATP</name>
        <dbReference type="ChEBI" id="CHEBI:30616"/>
    </ligand>
</feature>
<feature type="binding site" evidence="1">
    <location>
        <position position="375"/>
    </location>
    <ligand>
        <name>Mg(2+)</name>
        <dbReference type="ChEBI" id="CHEBI:18420"/>
    </ligand>
</feature>
<feature type="binding site" evidence="1">
    <location>
        <position position="405"/>
    </location>
    <ligand>
        <name>Mg(2+)</name>
        <dbReference type="ChEBI" id="CHEBI:18420"/>
    </ligand>
</feature>
<feature type="binding site" evidence="1">
    <location>
        <position position="472"/>
    </location>
    <ligand>
        <name>ATP</name>
        <dbReference type="ChEBI" id="CHEBI:30616"/>
    </ligand>
</feature>
<feature type="binding site" evidence="1">
    <location>
        <position position="568"/>
    </location>
    <ligand>
        <name>ATP</name>
        <dbReference type="ChEBI" id="CHEBI:30616"/>
    </ligand>
</feature>
<feature type="binding site" evidence="1">
    <location>
        <position position="596"/>
    </location>
    <ligand>
        <name>ATP</name>
        <dbReference type="ChEBI" id="CHEBI:30616"/>
    </ligand>
</feature>
<comment type="function">
    <text evidence="1">Catalyzes the reversible transfer of the terminal phosphate of ATP to form a long-chain polyphosphate (polyP).</text>
</comment>
<comment type="catalytic activity">
    <reaction evidence="1">
        <text>[phosphate](n) + ATP = [phosphate](n+1) + ADP</text>
        <dbReference type="Rhea" id="RHEA:19573"/>
        <dbReference type="Rhea" id="RHEA-COMP:9859"/>
        <dbReference type="Rhea" id="RHEA-COMP:14280"/>
        <dbReference type="ChEBI" id="CHEBI:16838"/>
        <dbReference type="ChEBI" id="CHEBI:30616"/>
        <dbReference type="ChEBI" id="CHEBI:456216"/>
        <dbReference type="EC" id="2.7.4.1"/>
    </reaction>
</comment>
<comment type="cofactor">
    <cofactor evidence="1">
        <name>Mg(2+)</name>
        <dbReference type="ChEBI" id="CHEBI:18420"/>
    </cofactor>
</comment>
<comment type="PTM">
    <text evidence="1">An intermediate of this reaction is the autophosphorylated ppk in which a phosphate is covalently linked to a histidine residue through a N-P bond.</text>
</comment>
<comment type="similarity">
    <text evidence="1">Belongs to the polyphosphate kinase 1 (PPK1) family.</text>
</comment>
<protein>
    <recommendedName>
        <fullName evidence="1">Polyphosphate kinase</fullName>
        <ecNumber evidence="1">2.7.4.1</ecNumber>
    </recommendedName>
    <alternativeName>
        <fullName evidence="1">ATP-polyphosphate phosphotransferase</fullName>
    </alternativeName>
    <alternativeName>
        <fullName evidence="1">Polyphosphoric acid kinase</fullName>
    </alternativeName>
</protein>